<reference key="1">
    <citation type="journal article" date="2007" name="Proc. Natl. Acad. Sci. U.S.A.">
        <title>Using plastid genome-scale data to resolve enigmatic relationships among basal angiosperms.</title>
        <authorList>
            <person name="Moore M.J."/>
            <person name="Bell C.D."/>
            <person name="Soltis P.S."/>
            <person name="Soltis D.E."/>
        </authorList>
    </citation>
    <scope>NUCLEOTIDE SEQUENCE [LARGE SCALE GENOMIC DNA]</scope>
</reference>
<geneLocation type="chloroplast"/>
<dbReference type="EMBL" id="EF614270">
    <property type="protein sequence ID" value="ABQ81446.1"/>
    <property type="molecule type" value="Genomic_DNA"/>
</dbReference>
<dbReference type="RefSeq" id="YP_001542443.1">
    <property type="nucleotide sequence ID" value="NC_009962.1"/>
</dbReference>
<dbReference type="SMR" id="A8SE99"/>
<dbReference type="GeneID" id="5729447"/>
<dbReference type="GO" id="GO:0009535">
    <property type="term" value="C:chloroplast thylakoid membrane"/>
    <property type="evidence" value="ECO:0007669"/>
    <property type="project" value="UniProtKB-SubCell"/>
</dbReference>
<dbReference type="GO" id="GO:0009523">
    <property type="term" value="C:photosystem II"/>
    <property type="evidence" value="ECO:0007669"/>
    <property type="project" value="UniProtKB-KW"/>
</dbReference>
<dbReference type="GO" id="GO:0016168">
    <property type="term" value="F:chlorophyll binding"/>
    <property type="evidence" value="ECO:0007669"/>
    <property type="project" value="UniProtKB-UniRule"/>
</dbReference>
<dbReference type="GO" id="GO:0045156">
    <property type="term" value="F:electron transporter, transferring electrons within the cyclic electron transport pathway of photosynthesis activity"/>
    <property type="evidence" value="ECO:0007669"/>
    <property type="project" value="InterPro"/>
</dbReference>
<dbReference type="GO" id="GO:0046872">
    <property type="term" value="F:metal ion binding"/>
    <property type="evidence" value="ECO:0007669"/>
    <property type="project" value="UniProtKB-KW"/>
</dbReference>
<dbReference type="GO" id="GO:0009772">
    <property type="term" value="P:photosynthetic electron transport in photosystem II"/>
    <property type="evidence" value="ECO:0007669"/>
    <property type="project" value="InterPro"/>
</dbReference>
<dbReference type="FunFam" id="1.10.10.670:FF:000001">
    <property type="entry name" value="Photosystem II CP43 reaction center protein"/>
    <property type="match status" value="1"/>
</dbReference>
<dbReference type="Gene3D" id="1.10.10.670">
    <property type="entry name" value="photosystem ii from thermosynechococcus elongatus"/>
    <property type="match status" value="1"/>
</dbReference>
<dbReference type="HAMAP" id="MF_01496">
    <property type="entry name" value="PSII_PsbC_CP43"/>
    <property type="match status" value="1"/>
</dbReference>
<dbReference type="InterPro" id="IPR000932">
    <property type="entry name" value="PS_antenna-like"/>
</dbReference>
<dbReference type="InterPro" id="IPR036001">
    <property type="entry name" value="PS_II_antenna-like_sf"/>
</dbReference>
<dbReference type="InterPro" id="IPR005869">
    <property type="entry name" value="PSII_PsbC"/>
</dbReference>
<dbReference type="InterPro" id="IPR044900">
    <property type="entry name" value="PSII_PsbC_sf"/>
</dbReference>
<dbReference type="NCBIfam" id="TIGR01153">
    <property type="entry name" value="psbC"/>
    <property type="match status" value="1"/>
</dbReference>
<dbReference type="Pfam" id="PF00421">
    <property type="entry name" value="PSII"/>
    <property type="match status" value="1"/>
</dbReference>
<dbReference type="SUPFAM" id="SSF161077">
    <property type="entry name" value="Photosystem II antenna protein-like"/>
    <property type="match status" value="1"/>
</dbReference>
<feature type="propeptide" id="PRO_0000431120" evidence="1">
    <location>
        <begin position="1"/>
        <end position="2"/>
    </location>
</feature>
<feature type="chain" id="PRO_0000361337" description="Photosystem II CP43 reaction center protein" evidence="1">
    <location>
        <begin position="3"/>
        <end position="461"/>
    </location>
</feature>
<feature type="transmembrane region" description="Helical" evidence="1">
    <location>
        <begin position="57"/>
        <end position="81"/>
    </location>
</feature>
<feature type="transmembrane region" description="Helical" evidence="1">
    <location>
        <begin position="122"/>
        <end position="143"/>
    </location>
</feature>
<feature type="transmembrane region" description="Helical" evidence="1">
    <location>
        <begin position="166"/>
        <end position="188"/>
    </location>
</feature>
<feature type="transmembrane region" description="Helical" evidence="1">
    <location>
        <begin position="243"/>
        <end position="263"/>
    </location>
</feature>
<feature type="transmembrane region" description="Helical" evidence="1">
    <location>
        <begin position="279"/>
        <end position="300"/>
    </location>
</feature>
<feature type="transmembrane region" description="Helical" evidence="1">
    <location>
        <begin position="435"/>
        <end position="459"/>
    </location>
</feature>
<feature type="binding site" evidence="1">
    <location>
        <position position="355"/>
    </location>
    <ligand>
        <name>[CaMn4O5] cluster</name>
        <dbReference type="ChEBI" id="CHEBI:189552"/>
    </ligand>
</feature>
<feature type="modified residue" description="N-acetylthreonine" evidence="1">
    <location>
        <position position="3"/>
    </location>
</feature>
<feature type="modified residue" description="Phosphothreonine" evidence="1">
    <location>
        <position position="3"/>
    </location>
</feature>
<name>PSBC_CERDE</name>
<protein>
    <recommendedName>
        <fullName evidence="1">Photosystem II CP43 reaction center protein</fullName>
    </recommendedName>
    <alternativeName>
        <fullName evidence="1">PSII 43 kDa protein</fullName>
    </alternativeName>
    <alternativeName>
        <fullName evidence="1">Protein CP-43</fullName>
    </alternativeName>
</protein>
<evidence type="ECO:0000255" key="1">
    <source>
        <dbReference type="HAMAP-Rule" id="MF_01496"/>
    </source>
</evidence>
<proteinExistence type="inferred from homology"/>
<sequence>METLFNGTLSLAGRDQETTGFAWWAGNARLINLSGKLLGAHVAHAGLIVFWAGAMNLFEVAHFVPEKPMYEQGLILLPHLATLGWGVGPGGEVIDTFPYFVSGVLHLISSAVLGFGGIYHALLGPETLEESFPFFGYVWKDRNKMTTILGIHLILLGLGAFLLVFKALYFGGVYDTWAPGGGDVRKITNLTLSPSVIFGYLLKSPFGGEGWIVSVDDLEDIIGGHVWLGSICILGGIWHILTKPFAWARRAFVWSGEAYLSYSLAALAVFGFIACCFVWFNNTAYPSEFYGPTGPEASQAQAFTFLVRDQRLGANVGSAQGPTGLGKYLMRSPTGEVIFGGETMRFWDLRAPWLEPLRGPNGLDLSRLKKDIQPWQERRSAEYMTHAPLGSLNSVGGVATEINAVNYVSPRSWLATSHFVLGFFLFVGHLWHAGRARAAAAGFEKGIDRDLEPVLSMTPLN</sequence>
<organism>
    <name type="scientific">Ceratophyllum demersum</name>
    <name type="common">Rigid hornwort</name>
    <name type="synonym">Coontail</name>
    <dbReference type="NCBI Taxonomy" id="4428"/>
    <lineage>
        <taxon>Eukaryota</taxon>
        <taxon>Viridiplantae</taxon>
        <taxon>Streptophyta</taxon>
        <taxon>Embryophyta</taxon>
        <taxon>Tracheophyta</taxon>
        <taxon>Spermatophyta</taxon>
        <taxon>Magnoliopsida</taxon>
        <taxon>Ceratophyllales</taxon>
        <taxon>Ceratophyllaceae</taxon>
        <taxon>Ceratophyllum</taxon>
    </lineage>
</organism>
<accession>A8SE99</accession>
<gene>
    <name evidence="1" type="primary">psbC</name>
</gene>
<keyword id="KW-0007">Acetylation</keyword>
<keyword id="KW-0148">Chlorophyll</keyword>
<keyword id="KW-0150">Chloroplast</keyword>
<keyword id="KW-0157">Chromophore</keyword>
<keyword id="KW-0464">Manganese</keyword>
<keyword id="KW-0472">Membrane</keyword>
<keyword id="KW-0479">Metal-binding</keyword>
<keyword id="KW-0597">Phosphoprotein</keyword>
<keyword id="KW-0602">Photosynthesis</keyword>
<keyword id="KW-0604">Photosystem II</keyword>
<keyword id="KW-0934">Plastid</keyword>
<keyword id="KW-0793">Thylakoid</keyword>
<keyword id="KW-0812">Transmembrane</keyword>
<keyword id="KW-1133">Transmembrane helix</keyword>
<comment type="function">
    <text evidence="1">One of the components of the core complex of photosystem II (PSII). It binds chlorophyll and helps catalyze the primary light-induced photochemical processes of PSII. PSII is a light-driven water:plastoquinone oxidoreductase, using light energy to abstract electrons from H(2)O, generating O(2) and a proton gradient subsequently used for ATP formation.</text>
</comment>
<comment type="cofactor">
    <text evidence="1">Binds multiple chlorophylls and provides some of the ligands for the Ca-4Mn-5O cluster of the oxygen-evolving complex. It may also provide a ligand for a Cl- that is required for oxygen evolution. PSII binds additional chlorophylls, carotenoids and specific lipids.</text>
</comment>
<comment type="subunit">
    <text evidence="1">PSII is composed of 1 copy each of membrane proteins PsbA, PsbB, PsbC, PsbD, PsbE, PsbF, PsbH, PsbI, PsbJ, PsbK, PsbL, PsbM, PsbT, PsbX, PsbY, PsbZ, Psb30/Ycf12, at least 3 peripheral proteins of the oxygen-evolving complex and a large number of cofactors. It forms dimeric complexes.</text>
</comment>
<comment type="subcellular location">
    <subcellularLocation>
        <location evidence="1">Plastid</location>
        <location evidence="1">Chloroplast thylakoid membrane</location>
        <topology evidence="1">Multi-pass membrane protein</topology>
    </subcellularLocation>
</comment>
<comment type="similarity">
    <text evidence="1">Belongs to the PsbB/PsbC family. PsbC subfamily.</text>
</comment>